<feature type="chain" id="PRO_0000217274" description="Endoribonuclease VapD homolog">
    <location>
        <begin position="1"/>
        <end position="92"/>
    </location>
</feature>
<accession>Q51003</accession>
<name>VAPD_NEIGO</name>
<keyword id="KW-0378">Hydrolase</keyword>
<keyword id="KW-0540">Nuclease</keyword>
<keyword id="KW-0614">Plasmid</keyword>
<keyword id="KW-0843">Virulence</keyword>
<evidence type="ECO:0000250" key="1"/>
<evidence type="ECO:0000305" key="2"/>
<protein>
    <recommendedName>
        <fullName>Endoribonuclease VapD homolog</fullName>
        <ecNumber>3.1.-.-</ecNumber>
    </recommendedName>
    <alternativeName>
        <fullName>Virulence-associated protein D homolog</fullName>
    </alternativeName>
</protein>
<sequence length="92" mass="10474">MYAISFDLVVADTAQNHPKGISQAYADIGYTLRKFGFTRIQGSLYTCQNEDMANLFSAINELKALPWFPSSVRDIRAFRIEQWSDFTSLVKS</sequence>
<geneLocation type="plasmid">
    <name>pJD1</name>
</geneLocation>
<organism>
    <name type="scientific">Neisseria gonorrhoeae</name>
    <dbReference type="NCBI Taxonomy" id="485"/>
    <lineage>
        <taxon>Bacteria</taxon>
        <taxon>Pseudomonadati</taxon>
        <taxon>Pseudomonadota</taxon>
        <taxon>Betaproteobacteria</taxon>
        <taxon>Neisseriales</taxon>
        <taxon>Neisseriaceae</taxon>
        <taxon>Neisseria</taxon>
    </lineage>
</organism>
<dbReference type="EC" id="3.1.-.-"/>
<dbReference type="EMBL" id="M10316">
    <property type="protein sequence ID" value="AAA88204.1"/>
    <property type="molecule type" value="Genomic_DNA"/>
</dbReference>
<dbReference type="RefSeq" id="NP_040415.1">
    <property type="nucleotide sequence ID" value="NC_001377.1"/>
</dbReference>
<dbReference type="RefSeq" id="WP_003690225.1">
    <property type="nucleotide sequence ID" value="NZ_WHPK01000008.1"/>
</dbReference>
<dbReference type="SMR" id="Q51003"/>
<dbReference type="GeneID" id="66754515"/>
<dbReference type="GO" id="GO:0004518">
    <property type="term" value="F:nuclease activity"/>
    <property type="evidence" value="ECO:0007669"/>
    <property type="project" value="UniProtKB-KW"/>
</dbReference>
<dbReference type="GO" id="GO:0003723">
    <property type="term" value="F:RNA binding"/>
    <property type="evidence" value="ECO:0007669"/>
    <property type="project" value="InterPro"/>
</dbReference>
<dbReference type="Gene3D" id="3.30.70.240">
    <property type="match status" value="1"/>
</dbReference>
<dbReference type="InterPro" id="IPR016368">
    <property type="entry name" value="VapD"/>
</dbReference>
<dbReference type="InterPro" id="IPR019199">
    <property type="entry name" value="Virulence_VapD/CRISPR_Cas2"/>
</dbReference>
<dbReference type="Pfam" id="PF09827">
    <property type="entry name" value="CRISPR_Cas2"/>
    <property type="match status" value="1"/>
</dbReference>
<dbReference type="PIRSF" id="PIRSF002882">
    <property type="entry name" value="VapD"/>
    <property type="match status" value="1"/>
</dbReference>
<reference key="1">
    <citation type="journal article" date="1985" name="J. Bacteriol.">
        <title>Cryptic plasmid of Neisseria gonorrhoeae: complete nucleotide sequence and genetic organization.</title>
        <authorList>
            <person name="Korch C."/>
            <person name="Hagblom P."/>
            <person name="Oehman H."/>
            <person name="Goeransson M."/>
            <person name="Normark S."/>
        </authorList>
    </citation>
    <scope>NUCLEOTIDE SEQUENCE [GENOMIC DNA]</scope>
</reference>
<comment type="function">
    <text evidence="1">Cleaves ssRNA, mostly between U:A.</text>
</comment>
<comment type="subunit">
    <text evidence="1">Homodimer.</text>
</comment>
<comment type="similarity">
    <text evidence="2">Belongs to the VapD ribonuclease family.</text>
</comment>
<proteinExistence type="inferred from homology"/>